<proteinExistence type="evidence at protein level"/>
<gene>
    <name type="ordered locus">PYRAB15770</name>
    <name type="ORF">PAB1040</name>
</gene>
<feature type="chain" id="PRO_0000146933" description="tRNA (cytidine(56)-2'-O)-methyltransferase">
    <location>
        <begin position="1"/>
        <end position="198"/>
    </location>
</feature>
<feature type="region of interest" description="Disordered" evidence="2">
    <location>
        <begin position="178"/>
        <end position="198"/>
    </location>
</feature>
<feature type="binding site" evidence="1">
    <location>
        <position position="81"/>
    </location>
    <ligand>
        <name>S-adenosyl-L-methionine</name>
        <dbReference type="ChEBI" id="CHEBI:59789"/>
    </ligand>
</feature>
<feature type="binding site" evidence="1">
    <location>
        <begin position="110"/>
        <end position="114"/>
    </location>
    <ligand>
        <name>S-adenosyl-L-methionine</name>
        <dbReference type="ChEBI" id="CHEBI:59789"/>
    </ligand>
</feature>
<feature type="binding site" evidence="1">
    <location>
        <begin position="128"/>
        <end position="135"/>
    </location>
    <ligand>
        <name>S-adenosyl-L-methionine</name>
        <dbReference type="ChEBI" id="CHEBI:59789"/>
    </ligand>
</feature>
<name>TRM56_PYRAB</name>
<reference key="1">
    <citation type="journal article" date="2003" name="Mol. Microbiol.">
        <title>An integrated analysis of the genome of the hyperthermophilic archaeon Pyrococcus abyssi.</title>
        <authorList>
            <person name="Cohen G.N."/>
            <person name="Barbe V."/>
            <person name="Flament D."/>
            <person name="Galperin M."/>
            <person name="Heilig R."/>
            <person name="Lecompte O."/>
            <person name="Poch O."/>
            <person name="Prieur D."/>
            <person name="Querellou J."/>
            <person name="Ripp R."/>
            <person name="Thierry J.-C."/>
            <person name="Van der Oost J."/>
            <person name="Weissenbach J."/>
            <person name="Zivanovic Y."/>
            <person name="Forterre P."/>
        </authorList>
    </citation>
    <scope>NUCLEOTIDE SEQUENCE [LARGE SCALE GENOMIC DNA]</scope>
    <source>
        <strain>GE5 / Orsay</strain>
    </source>
</reference>
<reference key="2">
    <citation type="journal article" date="2012" name="Curr. Microbiol.">
        <title>Re-annotation of two hyperthermophilic archaea Pyrococcus abyssi GE5 and Pyrococcus furiosus DSM 3638.</title>
        <authorList>
            <person name="Gao J."/>
            <person name="Wang J."/>
        </authorList>
    </citation>
    <scope>GENOME REANNOTATION</scope>
    <source>
        <strain>GE5 / Orsay</strain>
    </source>
</reference>
<reference key="3">
    <citation type="journal article" date="2005" name="RNA">
        <title>The Cm56 tRNA modification in archaea is catalyzed either by a specific 2'-O-methylase, or a C/D sRNP.</title>
        <authorList>
            <person name="Renalier M.-H."/>
            <person name="Joseph N."/>
            <person name="Gaspin C."/>
            <person name="Thebault P."/>
            <person name="Mougin A."/>
        </authorList>
    </citation>
    <scope>FUNCTION AS A METHYLTRANSFERASE</scope>
    <scope>CATALYTIC ACTIVITY</scope>
</reference>
<keyword id="KW-0963">Cytoplasm</keyword>
<keyword id="KW-0489">Methyltransferase</keyword>
<keyword id="KW-0949">S-adenosyl-L-methionine</keyword>
<keyword id="KW-0808">Transferase</keyword>
<keyword id="KW-0819">tRNA processing</keyword>
<organism>
    <name type="scientific">Pyrococcus abyssi (strain GE5 / Orsay)</name>
    <dbReference type="NCBI Taxonomy" id="272844"/>
    <lineage>
        <taxon>Archaea</taxon>
        <taxon>Methanobacteriati</taxon>
        <taxon>Methanobacteriota</taxon>
        <taxon>Thermococci</taxon>
        <taxon>Thermococcales</taxon>
        <taxon>Thermococcaceae</taxon>
        <taxon>Pyrococcus</taxon>
    </lineage>
</organism>
<evidence type="ECO:0000250" key="1"/>
<evidence type="ECO:0000256" key="2">
    <source>
        <dbReference type="SAM" id="MobiDB-lite"/>
    </source>
</evidence>
<evidence type="ECO:0000269" key="3">
    <source>
    </source>
</evidence>
<evidence type="ECO:0000305" key="4"/>
<accession>Q9UYD1</accession>
<accession>G8ZJ01</accession>
<sequence>MIVVLRLGHRPERDKRVTTHVALTARAFGADGIIIVSEEVDLKVKESVEDVVERWGGPFFVKFEKSWRKVMKEFDGVKVHLTMYGIHIDDIIDELREKLREGRDFMVIVGAEKVPREVYELADYNVAIGNQPHSEVAALAVFLDRLLEGKGLRKEFKGAKLKIIPQARGKMVVEVQKDAKQAEASGEGASRKNGQLPS</sequence>
<dbReference type="EC" id="2.1.1.206"/>
<dbReference type="EMBL" id="AJ248288">
    <property type="protein sequence ID" value="CAB50481.1"/>
    <property type="molecule type" value="Genomic_DNA"/>
</dbReference>
<dbReference type="EMBL" id="HE613800">
    <property type="protein sequence ID" value="CCE71034.1"/>
    <property type="molecule type" value="Genomic_DNA"/>
</dbReference>
<dbReference type="PIR" id="C75005">
    <property type="entry name" value="C75005"/>
</dbReference>
<dbReference type="RefSeq" id="WP_010868694.1">
    <property type="nucleotide sequence ID" value="NC_000868.1"/>
</dbReference>
<dbReference type="SMR" id="Q9UYD1"/>
<dbReference type="STRING" id="272844.PAB1040"/>
<dbReference type="KEGG" id="pab:PAB1040"/>
<dbReference type="PATRIC" id="fig|272844.11.peg.1681"/>
<dbReference type="eggNOG" id="arCOG01857">
    <property type="taxonomic scope" value="Archaea"/>
</dbReference>
<dbReference type="HOGENOM" id="CLU_123709_0_0_2"/>
<dbReference type="OrthoDB" id="14397at2157"/>
<dbReference type="PhylomeDB" id="Q9UYD1"/>
<dbReference type="BRENDA" id="2.1.1.206">
    <property type="organism ID" value="5242"/>
</dbReference>
<dbReference type="Proteomes" id="UP000000810">
    <property type="component" value="Chromosome"/>
</dbReference>
<dbReference type="Proteomes" id="UP000009139">
    <property type="component" value="Chromosome"/>
</dbReference>
<dbReference type="GO" id="GO:0005737">
    <property type="term" value="C:cytoplasm"/>
    <property type="evidence" value="ECO:0000305"/>
    <property type="project" value="UniProtKB"/>
</dbReference>
<dbReference type="GO" id="GO:0106059">
    <property type="term" value="F:tRNA (cytidine(56)-2'-O)-methyltransferase activity"/>
    <property type="evidence" value="ECO:0007669"/>
    <property type="project" value="UniProtKB-EC"/>
</dbReference>
<dbReference type="GO" id="GO:0008175">
    <property type="term" value="F:tRNA methyltransferase activity"/>
    <property type="evidence" value="ECO:0000314"/>
    <property type="project" value="UniProtKB"/>
</dbReference>
<dbReference type="GO" id="GO:0002128">
    <property type="term" value="P:tRNA nucleoside ribose methylation"/>
    <property type="evidence" value="ECO:0000314"/>
    <property type="project" value="UniProtKB"/>
</dbReference>
<dbReference type="CDD" id="cd18083">
    <property type="entry name" value="aTrm56-like"/>
    <property type="match status" value="1"/>
</dbReference>
<dbReference type="Gene3D" id="3.40.1280.10">
    <property type="match status" value="1"/>
</dbReference>
<dbReference type="HAMAP" id="MF_00077">
    <property type="entry name" value="tRNA_methyltr_aTrm56"/>
    <property type="match status" value="1"/>
</dbReference>
<dbReference type="InterPro" id="IPR029028">
    <property type="entry name" value="Alpha/beta_knot_MTases"/>
</dbReference>
<dbReference type="InterPro" id="IPR029026">
    <property type="entry name" value="tRNA_m1G_MTases_N"/>
</dbReference>
<dbReference type="InterPro" id="IPR002845">
    <property type="entry name" value="tRNA_mtfrase_aTrm56"/>
</dbReference>
<dbReference type="NCBIfam" id="NF003048">
    <property type="entry name" value="PRK03958.1"/>
    <property type="match status" value="1"/>
</dbReference>
<dbReference type="PANTHER" id="PTHR42197">
    <property type="entry name" value="TRNA (CYTIDINE(56)-2'-O)-METHYLTRANSFERASE"/>
    <property type="match status" value="1"/>
</dbReference>
<dbReference type="PANTHER" id="PTHR42197:SF1">
    <property type="entry name" value="TRNA (CYTIDINE(56)-2'-O)-METHYLTRANSFERASE"/>
    <property type="match status" value="1"/>
</dbReference>
<dbReference type="Pfam" id="PF01994">
    <property type="entry name" value="Trm56"/>
    <property type="match status" value="1"/>
</dbReference>
<dbReference type="PIRSF" id="PIRSF016123">
    <property type="entry name" value="UCP016123"/>
    <property type="match status" value="1"/>
</dbReference>
<dbReference type="SUPFAM" id="SSF75217">
    <property type="entry name" value="alpha/beta knot"/>
    <property type="match status" value="1"/>
</dbReference>
<comment type="function">
    <text evidence="3">Specifically catalyzes the AdoMet-dependent 2'-O-ribose methylation of cytidine at position 56 in tRNAs.</text>
</comment>
<comment type="catalytic activity">
    <reaction evidence="3">
        <text>cytidine(56) in tRNA + S-adenosyl-L-methionine = 2'-O-methylcytidine(56) in tRNA + S-adenosyl-L-homocysteine + H(+)</text>
        <dbReference type="Rhea" id="RHEA:42968"/>
        <dbReference type="Rhea" id="RHEA-COMP:10308"/>
        <dbReference type="Rhea" id="RHEA-COMP:10309"/>
        <dbReference type="ChEBI" id="CHEBI:15378"/>
        <dbReference type="ChEBI" id="CHEBI:57856"/>
        <dbReference type="ChEBI" id="CHEBI:59789"/>
        <dbReference type="ChEBI" id="CHEBI:74495"/>
        <dbReference type="ChEBI" id="CHEBI:82748"/>
        <dbReference type="EC" id="2.1.1.206"/>
    </reaction>
</comment>
<comment type="subunit">
    <text evidence="1">Homodimer.</text>
</comment>
<comment type="subcellular location">
    <subcellularLocation>
        <location evidence="4">Cytoplasm</location>
    </subcellularLocation>
</comment>
<comment type="similarity">
    <text evidence="4">Belongs to the aTrm56 family.</text>
</comment>
<protein>
    <recommendedName>
        <fullName>tRNA (cytidine(56)-2'-O)-methyltransferase</fullName>
        <ecNumber>2.1.1.206</ecNumber>
    </recommendedName>
    <alternativeName>
        <fullName>tRNA ribose 2'-O-methyltransferase aTrm56</fullName>
    </alternativeName>
</protein>